<gene>
    <name type="primary">sspH</name>
    <name type="synonym">yfjU</name>
    <name type="ordered locus">BSU08110</name>
</gene>
<protein>
    <recommendedName>
        <fullName>Small, acid-soluble spore protein H</fullName>
        <shortName>SASP H</shortName>
    </recommendedName>
</protein>
<proteinExistence type="evidence at protein level"/>
<reference key="1">
    <citation type="journal article" date="1997" name="Nature">
        <title>The complete genome sequence of the Gram-positive bacterium Bacillus subtilis.</title>
        <authorList>
            <person name="Kunst F."/>
            <person name="Ogasawara N."/>
            <person name="Moszer I."/>
            <person name="Albertini A.M."/>
            <person name="Alloni G."/>
            <person name="Azevedo V."/>
            <person name="Bertero M.G."/>
            <person name="Bessieres P."/>
            <person name="Bolotin A."/>
            <person name="Borchert S."/>
            <person name="Borriss R."/>
            <person name="Boursier L."/>
            <person name="Brans A."/>
            <person name="Braun M."/>
            <person name="Brignell S.C."/>
            <person name="Bron S."/>
            <person name="Brouillet S."/>
            <person name="Bruschi C.V."/>
            <person name="Caldwell B."/>
            <person name="Capuano V."/>
            <person name="Carter N.M."/>
            <person name="Choi S.-K."/>
            <person name="Codani J.-J."/>
            <person name="Connerton I.F."/>
            <person name="Cummings N.J."/>
            <person name="Daniel R.A."/>
            <person name="Denizot F."/>
            <person name="Devine K.M."/>
            <person name="Duesterhoeft A."/>
            <person name="Ehrlich S.D."/>
            <person name="Emmerson P.T."/>
            <person name="Entian K.-D."/>
            <person name="Errington J."/>
            <person name="Fabret C."/>
            <person name="Ferrari E."/>
            <person name="Foulger D."/>
            <person name="Fritz C."/>
            <person name="Fujita M."/>
            <person name="Fujita Y."/>
            <person name="Fuma S."/>
            <person name="Galizzi A."/>
            <person name="Galleron N."/>
            <person name="Ghim S.-Y."/>
            <person name="Glaser P."/>
            <person name="Goffeau A."/>
            <person name="Golightly E.J."/>
            <person name="Grandi G."/>
            <person name="Guiseppi G."/>
            <person name="Guy B.J."/>
            <person name="Haga K."/>
            <person name="Haiech J."/>
            <person name="Harwood C.R."/>
            <person name="Henaut A."/>
            <person name="Hilbert H."/>
            <person name="Holsappel S."/>
            <person name="Hosono S."/>
            <person name="Hullo M.-F."/>
            <person name="Itaya M."/>
            <person name="Jones L.-M."/>
            <person name="Joris B."/>
            <person name="Karamata D."/>
            <person name="Kasahara Y."/>
            <person name="Klaerr-Blanchard M."/>
            <person name="Klein C."/>
            <person name="Kobayashi Y."/>
            <person name="Koetter P."/>
            <person name="Koningstein G."/>
            <person name="Krogh S."/>
            <person name="Kumano M."/>
            <person name="Kurita K."/>
            <person name="Lapidus A."/>
            <person name="Lardinois S."/>
            <person name="Lauber J."/>
            <person name="Lazarevic V."/>
            <person name="Lee S.-M."/>
            <person name="Levine A."/>
            <person name="Liu H."/>
            <person name="Masuda S."/>
            <person name="Mauel C."/>
            <person name="Medigue C."/>
            <person name="Medina N."/>
            <person name="Mellado R.P."/>
            <person name="Mizuno M."/>
            <person name="Moestl D."/>
            <person name="Nakai S."/>
            <person name="Noback M."/>
            <person name="Noone D."/>
            <person name="O'Reilly M."/>
            <person name="Ogawa K."/>
            <person name="Ogiwara A."/>
            <person name="Oudega B."/>
            <person name="Park S.-H."/>
            <person name="Parro V."/>
            <person name="Pohl T.M."/>
            <person name="Portetelle D."/>
            <person name="Porwollik S."/>
            <person name="Prescott A.M."/>
            <person name="Presecan E."/>
            <person name="Pujic P."/>
            <person name="Purnelle B."/>
            <person name="Rapoport G."/>
            <person name="Rey M."/>
            <person name="Reynolds S."/>
            <person name="Rieger M."/>
            <person name="Rivolta C."/>
            <person name="Rocha E."/>
            <person name="Roche B."/>
            <person name="Rose M."/>
            <person name="Sadaie Y."/>
            <person name="Sato T."/>
            <person name="Scanlan E."/>
            <person name="Schleich S."/>
            <person name="Schroeter R."/>
            <person name="Scoffone F."/>
            <person name="Sekiguchi J."/>
            <person name="Sekowska A."/>
            <person name="Seror S.J."/>
            <person name="Serror P."/>
            <person name="Shin B.-S."/>
            <person name="Soldo B."/>
            <person name="Sorokin A."/>
            <person name="Tacconi E."/>
            <person name="Takagi T."/>
            <person name="Takahashi H."/>
            <person name="Takemaru K."/>
            <person name="Takeuchi M."/>
            <person name="Tamakoshi A."/>
            <person name="Tanaka T."/>
            <person name="Terpstra P."/>
            <person name="Tognoni A."/>
            <person name="Tosato V."/>
            <person name="Uchiyama S."/>
            <person name="Vandenbol M."/>
            <person name="Vannier F."/>
            <person name="Vassarotti A."/>
            <person name="Viari A."/>
            <person name="Wambutt R."/>
            <person name="Wedler E."/>
            <person name="Wedler H."/>
            <person name="Weitzenegger T."/>
            <person name="Winters P."/>
            <person name="Wipat A."/>
            <person name="Yamamoto H."/>
            <person name="Yamane K."/>
            <person name="Yasumoto K."/>
            <person name="Yata K."/>
            <person name="Yoshida K."/>
            <person name="Yoshikawa H.-F."/>
            <person name="Zumstein E."/>
            <person name="Yoshikawa H."/>
            <person name="Danchin A."/>
        </authorList>
    </citation>
    <scope>NUCLEOTIDE SEQUENCE [LARGE SCALE GENOMIC DNA]</scope>
    <source>
        <strain>168</strain>
    </source>
</reference>
<reference key="2">
    <citation type="journal article" date="1998" name="J. Bacteriol.">
        <title>New small, acid-soluble proteins unique to spores of Bacillus subtilis: identification of the coding genes and regulation and function of two of these genes.</title>
        <authorList>
            <person name="Bagyan I."/>
            <person name="Setlow B."/>
            <person name="Setlow P."/>
        </authorList>
    </citation>
    <scope>PROTEIN SEQUENCE OF 1-12</scope>
    <scope>SUBCELLULAR LOCATION</scope>
</reference>
<reference key="3">
    <citation type="journal article" date="1999" name="Gene">
        <title>Regulation of four genes encoding small, acid-soluble spore proteins in Bacillus subtilis.</title>
        <authorList>
            <person name="Cabrera-Hernandez A."/>
            <person name="Sanchez-Salas J.-L."/>
            <person name="Paidhungat M."/>
            <person name="Setlow P."/>
        </authorList>
    </citation>
    <scope>INDUCTION</scope>
</reference>
<comment type="subcellular location">
    <subcellularLocation>
        <location evidence="2">Spore core</location>
    </subcellularLocation>
</comment>
<comment type="induction">
    <text evidence="1">Expressed only in the forespore compartment of sporulating cells. Disappears after 45 minutes of spore germination. Expression is sigma G-dependent.</text>
</comment>
<comment type="similarity">
    <text evidence="3">Belongs to the SspH family.</text>
</comment>
<keyword id="KW-0903">Direct protein sequencing</keyword>
<keyword id="KW-1185">Reference proteome</keyword>
<keyword id="KW-0749">Sporulation</keyword>
<evidence type="ECO:0000269" key="1">
    <source>
    </source>
</evidence>
<evidence type="ECO:0000269" key="2">
    <source>
    </source>
</evidence>
<evidence type="ECO:0000305" key="3"/>
<sequence length="59" mass="6869">MNIQRAKEIVESPDMKKVTYNGVPIYIQHVNEETGTARIYPLDEPQEEHEVQLNSLKED</sequence>
<name>SSPH_BACSU</name>
<accession>O31552</accession>
<organism>
    <name type="scientific">Bacillus subtilis (strain 168)</name>
    <dbReference type="NCBI Taxonomy" id="224308"/>
    <lineage>
        <taxon>Bacteria</taxon>
        <taxon>Bacillati</taxon>
        <taxon>Bacillota</taxon>
        <taxon>Bacilli</taxon>
        <taxon>Bacillales</taxon>
        <taxon>Bacillaceae</taxon>
        <taxon>Bacillus</taxon>
    </lineage>
</organism>
<feature type="chain" id="PRO_0000162320" description="Small, acid-soluble spore protein H">
    <location>
        <begin position="1"/>
        <end position="59"/>
    </location>
</feature>
<dbReference type="EMBL" id="AL009126">
    <property type="protein sequence ID" value="CAB12640.1"/>
    <property type="molecule type" value="Genomic_DNA"/>
</dbReference>
<dbReference type="PIR" id="D69807">
    <property type="entry name" value="D69807"/>
</dbReference>
<dbReference type="RefSeq" id="NP_388692.1">
    <property type="nucleotide sequence ID" value="NC_000964.3"/>
</dbReference>
<dbReference type="RefSeq" id="WP_003244276.1">
    <property type="nucleotide sequence ID" value="NZ_OZ025638.1"/>
</dbReference>
<dbReference type="FunCoup" id="O31552">
    <property type="interactions" value="77"/>
</dbReference>
<dbReference type="STRING" id="224308.BSU08110"/>
<dbReference type="PaxDb" id="224308-BSU08110"/>
<dbReference type="EnsemblBacteria" id="CAB12640">
    <property type="protein sequence ID" value="CAB12640"/>
    <property type="gene ID" value="BSU_08110"/>
</dbReference>
<dbReference type="GeneID" id="939208"/>
<dbReference type="KEGG" id="bsu:BSU08110"/>
<dbReference type="PATRIC" id="fig|224308.179.peg.877"/>
<dbReference type="eggNOG" id="ENOG5033AUF">
    <property type="taxonomic scope" value="Bacteria"/>
</dbReference>
<dbReference type="InParanoid" id="O31552"/>
<dbReference type="OrthoDB" id="1683648at2"/>
<dbReference type="BioCyc" id="BSUB:BSU08110-MONOMER"/>
<dbReference type="Proteomes" id="UP000001570">
    <property type="component" value="Chromosome"/>
</dbReference>
<dbReference type="GO" id="GO:0042601">
    <property type="term" value="C:endospore-forming forespore"/>
    <property type="evidence" value="ECO:0007669"/>
    <property type="project" value="InterPro"/>
</dbReference>
<dbReference type="GO" id="GO:0030436">
    <property type="term" value="P:asexual sporulation"/>
    <property type="evidence" value="ECO:0007669"/>
    <property type="project" value="UniProtKB-UniRule"/>
</dbReference>
<dbReference type="GO" id="GO:0030435">
    <property type="term" value="P:sporulation resulting in formation of a cellular spore"/>
    <property type="evidence" value="ECO:0007669"/>
    <property type="project" value="UniProtKB-KW"/>
</dbReference>
<dbReference type="HAMAP" id="MF_00667">
    <property type="entry name" value="SspH"/>
    <property type="match status" value="1"/>
</dbReference>
<dbReference type="InterPro" id="IPR012610">
    <property type="entry name" value="SASP_SspH"/>
</dbReference>
<dbReference type="NCBIfam" id="NF002867">
    <property type="entry name" value="PRK03174.1"/>
    <property type="match status" value="1"/>
</dbReference>
<dbReference type="NCBIfam" id="TIGR02861">
    <property type="entry name" value="SASP_H"/>
    <property type="match status" value="1"/>
</dbReference>
<dbReference type="Pfam" id="PF08141">
    <property type="entry name" value="SspH"/>
    <property type="match status" value="1"/>
</dbReference>